<comment type="tissue specificity">
    <text evidence="1">Expressed in roots and leaves.</text>
</comment>
<comment type="similarity">
    <text evidence="2">Belongs to the eukaryotic ribosomal protein eL30 family.</text>
</comment>
<proteinExistence type="evidence at protein level"/>
<reference key="1">
    <citation type="journal article" date="2006" name="Plant Sci.">
        <title>Isolation and characterization of 15 genes encoding ribosomal proteins in wheat (Triticum aestivum L.).</title>
        <authorList>
            <person name="Yao Y.Y."/>
            <person name="Ni Z.F."/>
            <person name="Du J."/>
            <person name="Wang X."/>
            <person name="Wu H."/>
            <person name="Sun Q.X."/>
        </authorList>
        <dbReference type="AGRICOLA" id="IND43813201"/>
    </citation>
    <scope>NUCLEOTIDE SEQUENCE [MRNA]</scope>
    <scope>TISSUE SPECIFICITY</scope>
</reference>
<reference key="2">
    <citation type="journal article" date="2005" name="Nat. Struct. Mol. Biol.">
        <title>Localization and dynamic behavior of ribosomal protein L30e.</title>
        <authorList>
            <person name="Halic M."/>
            <person name="Becker T."/>
            <person name="Frank J."/>
            <person name="Spahn C.M.T."/>
            <person name="Beckmann R."/>
        </authorList>
    </citation>
    <scope>STRUCTURE BY ELECTRON MICROSCOPY (9.5 ANGSTROMS) OF 6-109</scope>
</reference>
<evidence type="ECO:0000269" key="1">
    <source ref="1"/>
</evidence>
<evidence type="ECO:0000305" key="2"/>
<keyword id="KW-0002">3D-structure</keyword>
<keyword id="KW-1185">Reference proteome</keyword>
<keyword id="KW-0687">Ribonucleoprotein</keyword>
<keyword id="KW-0689">Ribosomal protein</keyword>
<accession>Q5I7K9</accession>
<dbReference type="EMBL" id="AY846825">
    <property type="protein sequence ID" value="AAW50986.1"/>
    <property type="molecule type" value="mRNA"/>
</dbReference>
<dbReference type="PDB" id="1YSH">
    <property type="method" value="EM"/>
    <property type="resolution" value="9.50 A"/>
    <property type="chains" value="C=6-109"/>
</dbReference>
<dbReference type="PDB" id="4V3P">
    <property type="method" value="EM"/>
    <property type="resolution" value="34.00 A"/>
    <property type="chains" value="Lf=1-112"/>
</dbReference>
<dbReference type="PDB" id="4V7E">
    <property type="method" value="EM"/>
    <property type="resolution" value="5.50 A"/>
    <property type="chains" value="Cc=1-112"/>
</dbReference>
<dbReference type="PDB" id="8IP8">
    <property type="method" value="EM"/>
    <property type="resolution" value="2.90 A"/>
    <property type="chains" value="RA=1-112"/>
</dbReference>
<dbReference type="PDB" id="8IPA">
    <property type="method" value="EM"/>
    <property type="resolution" value="3.40 A"/>
    <property type="chains" value="RA=1-112"/>
</dbReference>
<dbReference type="PDB" id="8IPB">
    <property type="method" value="EM"/>
    <property type="resolution" value="3.40 A"/>
    <property type="chains" value="RA=1-112"/>
</dbReference>
<dbReference type="PDB" id="8JIV">
    <property type="method" value="EM"/>
    <property type="resolution" value="2.84 A"/>
    <property type="chains" value="Cc=1-112"/>
</dbReference>
<dbReference type="PDBsum" id="1YSH"/>
<dbReference type="PDBsum" id="4V3P"/>
<dbReference type="PDBsum" id="4V7E"/>
<dbReference type="PDBsum" id="8IP8"/>
<dbReference type="PDBsum" id="8IPA"/>
<dbReference type="PDBsum" id="8IPB"/>
<dbReference type="PDBsum" id="8JIV"/>
<dbReference type="SMR" id="Q5I7K9"/>
<dbReference type="STRING" id="4565.Q5I7K9"/>
<dbReference type="PaxDb" id="4565-Traes_1AL_AAE6A473E.1"/>
<dbReference type="eggNOG" id="KOG2988">
    <property type="taxonomic scope" value="Eukaryota"/>
</dbReference>
<dbReference type="EvolutionaryTrace" id="Q5I7K9"/>
<dbReference type="Proteomes" id="UP000019116">
    <property type="component" value="Unplaced"/>
</dbReference>
<dbReference type="ExpressionAtlas" id="Q5I7K9">
    <property type="expression patterns" value="baseline and differential"/>
</dbReference>
<dbReference type="GO" id="GO:0022625">
    <property type="term" value="C:cytosolic large ribosomal subunit"/>
    <property type="evidence" value="ECO:0000318"/>
    <property type="project" value="GO_Central"/>
</dbReference>
<dbReference type="GO" id="GO:0003723">
    <property type="term" value="F:RNA binding"/>
    <property type="evidence" value="ECO:0000318"/>
    <property type="project" value="GO_Central"/>
</dbReference>
<dbReference type="GO" id="GO:0003735">
    <property type="term" value="F:structural constituent of ribosome"/>
    <property type="evidence" value="ECO:0000318"/>
    <property type="project" value="GO_Central"/>
</dbReference>
<dbReference type="FunFam" id="3.30.1330.30:FF:000001">
    <property type="entry name" value="60S ribosomal protein L30"/>
    <property type="match status" value="1"/>
</dbReference>
<dbReference type="Gene3D" id="3.30.1330.30">
    <property type="match status" value="1"/>
</dbReference>
<dbReference type="InterPro" id="IPR039109">
    <property type="entry name" value="Ribosomal_eL30-like"/>
</dbReference>
<dbReference type="InterPro" id="IPR029064">
    <property type="entry name" value="Ribosomal_eL30-like_sf"/>
</dbReference>
<dbReference type="InterPro" id="IPR022991">
    <property type="entry name" value="Ribosomal_eL30_CS"/>
</dbReference>
<dbReference type="InterPro" id="IPR004038">
    <property type="entry name" value="Ribosomal_eL8/eL30/eS12/Gad45"/>
</dbReference>
<dbReference type="NCBIfam" id="NF002172">
    <property type="entry name" value="PRK01018.1"/>
    <property type="match status" value="1"/>
</dbReference>
<dbReference type="PANTHER" id="PTHR11449">
    <property type="entry name" value="RIBOSOMAL PROTEIN L30"/>
    <property type="match status" value="1"/>
</dbReference>
<dbReference type="Pfam" id="PF01248">
    <property type="entry name" value="Ribosomal_L7Ae"/>
    <property type="match status" value="1"/>
</dbReference>
<dbReference type="SUPFAM" id="SSF55315">
    <property type="entry name" value="L30e-like"/>
    <property type="match status" value="1"/>
</dbReference>
<dbReference type="PROSITE" id="PS00709">
    <property type="entry name" value="RIBOSOMAL_L30E_1"/>
    <property type="match status" value="1"/>
</dbReference>
<dbReference type="PROSITE" id="PS00993">
    <property type="entry name" value="RIBOSOMAL_L30E_2"/>
    <property type="match status" value="1"/>
</dbReference>
<organism>
    <name type="scientific">Triticum aestivum</name>
    <name type="common">Wheat</name>
    <dbReference type="NCBI Taxonomy" id="4565"/>
    <lineage>
        <taxon>Eukaryota</taxon>
        <taxon>Viridiplantae</taxon>
        <taxon>Streptophyta</taxon>
        <taxon>Embryophyta</taxon>
        <taxon>Tracheophyta</taxon>
        <taxon>Spermatophyta</taxon>
        <taxon>Magnoliopsida</taxon>
        <taxon>Liliopsida</taxon>
        <taxon>Poales</taxon>
        <taxon>Poaceae</taxon>
        <taxon>BOP clade</taxon>
        <taxon>Pooideae</taxon>
        <taxon>Triticodae</taxon>
        <taxon>Triticeae</taxon>
        <taxon>Triticinae</taxon>
        <taxon>Triticum</taxon>
    </lineage>
</organism>
<sequence>MAPTKKAKKSGENINNKLQLVMKSGKYTLGYKTVLKTLRSSLGKLIILANNCPPLRKSEIETYAMLAKISVHHFHGNNVDLGTACGKYYRVCCLSILDPGDSDIISTTTTTQ</sequence>
<feature type="chain" id="PRO_0000247609" description="Large ribosomal subunit protein eL30">
    <location>
        <begin position="1"/>
        <end position="112"/>
    </location>
</feature>
<feature type="sequence conflict" description="In Ref. 1; AAW50986." evidence="2" ref="1">
    <original>L</original>
    <variation>E</variation>
    <location>
        <position position="42"/>
    </location>
</feature>
<feature type="sequence conflict" description="In Ref. 1; AAW50986." evidence="2" ref="1">
    <original>T</original>
    <variation>C</variation>
    <location>
        <position position="62"/>
    </location>
</feature>
<feature type="sequence conflict" description="In Ref. 1; AAW50986." evidence="2" ref="1">
    <original>S</original>
    <variation>N</variation>
    <location>
        <position position="106"/>
    </location>
</feature>
<protein>
    <recommendedName>
        <fullName evidence="2">Large ribosomal subunit protein eL30</fullName>
    </recommendedName>
    <alternativeName>
        <fullName>60S ribosomal protein L30</fullName>
    </alternativeName>
</protein>
<name>RL30_WHEAT</name>